<gene>
    <name type="ordered locus">SPP_1494</name>
</gene>
<keyword id="KW-0963">Cytoplasm</keyword>
<dbReference type="EMBL" id="CP000920">
    <property type="protein sequence ID" value="ACO21024.1"/>
    <property type="molecule type" value="Genomic_DNA"/>
</dbReference>
<dbReference type="RefSeq" id="WP_000371293.1">
    <property type="nucleotide sequence ID" value="NC_012467.1"/>
</dbReference>
<dbReference type="SMR" id="C1CLH3"/>
<dbReference type="KEGG" id="spp:SPP_1494"/>
<dbReference type="HOGENOM" id="CLU_173137_0_2_9"/>
<dbReference type="GO" id="GO:0005737">
    <property type="term" value="C:cytoplasm"/>
    <property type="evidence" value="ECO:0007669"/>
    <property type="project" value="UniProtKB-SubCell"/>
</dbReference>
<dbReference type="Gene3D" id="1.10.287.540">
    <property type="entry name" value="Helix hairpin bin"/>
    <property type="match status" value="1"/>
</dbReference>
<dbReference type="HAMAP" id="MF_01103">
    <property type="entry name" value="UPF0291"/>
    <property type="match status" value="1"/>
</dbReference>
<dbReference type="InterPro" id="IPR009242">
    <property type="entry name" value="DUF896"/>
</dbReference>
<dbReference type="NCBIfam" id="NF002711">
    <property type="entry name" value="PRK02539.1"/>
    <property type="match status" value="1"/>
</dbReference>
<dbReference type="PANTHER" id="PTHR37300">
    <property type="entry name" value="UPF0291 PROTEIN CBO2609/CLC_2481"/>
    <property type="match status" value="1"/>
</dbReference>
<dbReference type="PANTHER" id="PTHR37300:SF1">
    <property type="entry name" value="UPF0291 PROTEIN YNZC"/>
    <property type="match status" value="1"/>
</dbReference>
<dbReference type="Pfam" id="PF05979">
    <property type="entry name" value="DUF896"/>
    <property type="match status" value="1"/>
</dbReference>
<dbReference type="SUPFAM" id="SSF158221">
    <property type="entry name" value="YnzC-like"/>
    <property type="match status" value="1"/>
</dbReference>
<sequence>MDPKKIARINELAKKKKTEGLTSEEKVEQAKLREEYIEGYRRAVRHHIEGIKIVDEEGNDVTPEKLRQVQREKGLHGRSLDDPNS</sequence>
<accession>C1CLH3</accession>
<evidence type="ECO:0000255" key="1">
    <source>
        <dbReference type="HAMAP-Rule" id="MF_01103"/>
    </source>
</evidence>
<evidence type="ECO:0000256" key="2">
    <source>
        <dbReference type="SAM" id="MobiDB-lite"/>
    </source>
</evidence>
<name>Y1494_STRZP</name>
<organism>
    <name type="scientific">Streptococcus pneumoniae (strain P1031)</name>
    <dbReference type="NCBI Taxonomy" id="488223"/>
    <lineage>
        <taxon>Bacteria</taxon>
        <taxon>Bacillati</taxon>
        <taxon>Bacillota</taxon>
        <taxon>Bacilli</taxon>
        <taxon>Lactobacillales</taxon>
        <taxon>Streptococcaceae</taxon>
        <taxon>Streptococcus</taxon>
    </lineage>
</organism>
<comment type="subcellular location">
    <subcellularLocation>
        <location evidence="1">Cytoplasm</location>
    </subcellularLocation>
</comment>
<comment type="similarity">
    <text evidence="1">Belongs to the UPF0291 family.</text>
</comment>
<proteinExistence type="inferred from homology"/>
<protein>
    <recommendedName>
        <fullName evidence="1">UPF0291 protein SPP_1494</fullName>
    </recommendedName>
</protein>
<feature type="chain" id="PRO_1000180981" description="UPF0291 protein SPP_1494">
    <location>
        <begin position="1"/>
        <end position="85"/>
    </location>
</feature>
<feature type="region of interest" description="Disordered" evidence="2">
    <location>
        <begin position="62"/>
        <end position="85"/>
    </location>
</feature>
<reference key="1">
    <citation type="journal article" date="2010" name="Genome Biol.">
        <title>Structure and dynamics of the pan-genome of Streptococcus pneumoniae and closely related species.</title>
        <authorList>
            <person name="Donati C."/>
            <person name="Hiller N.L."/>
            <person name="Tettelin H."/>
            <person name="Muzzi A."/>
            <person name="Croucher N.J."/>
            <person name="Angiuoli S.V."/>
            <person name="Oggioni M."/>
            <person name="Dunning Hotopp J.C."/>
            <person name="Hu F.Z."/>
            <person name="Riley D.R."/>
            <person name="Covacci A."/>
            <person name="Mitchell T.J."/>
            <person name="Bentley S.D."/>
            <person name="Kilian M."/>
            <person name="Ehrlich G.D."/>
            <person name="Rappuoli R."/>
            <person name="Moxon E.R."/>
            <person name="Masignani V."/>
        </authorList>
    </citation>
    <scope>NUCLEOTIDE SEQUENCE [LARGE SCALE GENOMIC DNA]</scope>
    <source>
        <strain>P1031</strain>
    </source>
</reference>